<evidence type="ECO:0000250" key="1"/>
<evidence type="ECO:0000255" key="2">
    <source>
        <dbReference type="HAMAP-Rule" id="MF_00118"/>
    </source>
</evidence>
<proteinExistence type="inferred from homology"/>
<organism>
    <name type="scientific">Desulfotalea psychrophila (strain LSv54 / DSM 12343)</name>
    <dbReference type="NCBI Taxonomy" id="177439"/>
    <lineage>
        <taxon>Bacteria</taxon>
        <taxon>Pseudomonadati</taxon>
        <taxon>Thermodesulfobacteriota</taxon>
        <taxon>Desulfobulbia</taxon>
        <taxon>Desulfobulbales</taxon>
        <taxon>Desulfocapsaceae</taxon>
        <taxon>Desulfotalea</taxon>
    </lineage>
</organism>
<keyword id="KW-0963">Cytoplasm</keyword>
<keyword id="KW-0251">Elongation factor</keyword>
<keyword id="KW-0342">GTP-binding</keyword>
<keyword id="KW-0378">Hydrolase</keyword>
<keyword id="KW-0460">Magnesium</keyword>
<keyword id="KW-0479">Metal-binding</keyword>
<keyword id="KW-0547">Nucleotide-binding</keyword>
<keyword id="KW-0648">Protein biosynthesis</keyword>
<keyword id="KW-1185">Reference proteome</keyword>
<protein>
    <recommendedName>
        <fullName evidence="2">Elongation factor Tu 2</fullName>
        <shortName evidence="2">EF-Tu 2</shortName>
        <ecNumber evidence="2">3.6.5.3</ecNumber>
    </recommendedName>
</protein>
<name>EFTU2_DESPS</name>
<sequence>MSKEKFERTKPHVNVGTIGHIDHGKTTLTAAITRVLSTKGQASFTDFSDIDKAPEEKERGITIATAHVEYETVNRHYAHVDCPGHADYIKNMITGAAQMDGAILVVAATDGAMPQTREHILLARQVGVPAMVVFLNKCDMVDDDELIELVEMELRELLDDYEFPGDDVPFIHGSALLALENPEDEDKAACIWALMEAIDSYIPEPERDVDQPFLMPVEDVFSISGRGTVATGRVERGIIKVGEEVAIVGVKDTVKTTCTGVEMFRKLLDEGRAGDNIGALLRGVKREDIERGQVLAKPGTITPHTKFKAECYILGKDEGGRHTPFFNGYRPQFYFRTTDVTGVVSLPEGIEMVMPGDNVSVDATLITPIAMDAGLRFAIREGGRTVGAGVISEIIE</sequence>
<feature type="chain" id="PRO_0000337372" description="Elongation factor Tu 2">
    <location>
        <begin position="1"/>
        <end position="396"/>
    </location>
</feature>
<feature type="domain" description="tr-type G">
    <location>
        <begin position="10"/>
        <end position="206"/>
    </location>
</feature>
<feature type="region of interest" description="G1" evidence="1">
    <location>
        <begin position="19"/>
        <end position="26"/>
    </location>
</feature>
<feature type="region of interest" description="G2" evidence="1">
    <location>
        <begin position="60"/>
        <end position="64"/>
    </location>
</feature>
<feature type="region of interest" description="G3" evidence="1">
    <location>
        <begin position="81"/>
        <end position="84"/>
    </location>
</feature>
<feature type="region of interest" description="G4" evidence="1">
    <location>
        <begin position="136"/>
        <end position="139"/>
    </location>
</feature>
<feature type="region of interest" description="G5" evidence="1">
    <location>
        <begin position="174"/>
        <end position="176"/>
    </location>
</feature>
<feature type="binding site" evidence="2">
    <location>
        <begin position="19"/>
        <end position="26"/>
    </location>
    <ligand>
        <name>GTP</name>
        <dbReference type="ChEBI" id="CHEBI:37565"/>
    </ligand>
</feature>
<feature type="binding site" evidence="2">
    <location>
        <position position="26"/>
    </location>
    <ligand>
        <name>Mg(2+)</name>
        <dbReference type="ChEBI" id="CHEBI:18420"/>
    </ligand>
</feature>
<feature type="binding site" evidence="2">
    <location>
        <begin position="81"/>
        <end position="85"/>
    </location>
    <ligand>
        <name>GTP</name>
        <dbReference type="ChEBI" id="CHEBI:37565"/>
    </ligand>
</feature>
<feature type="binding site" evidence="2">
    <location>
        <begin position="136"/>
        <end position="139"/>
    </location>
    <ligand>
        <name>GTP</name>
        <dbReference type="ChEBI" id="CHEBI:37565"/>
    </ligand>
</feature>
<gene>
    <name evidence="2" type="primary">tuf2</name>
    <name type="ordered locus">DP1122</name>
</gene>
<comment type="function">
    <text evidence="2">GTP hydrolase that promotes the GTP-dependent binding of aminoacyl-tRNA to the A-site of ribosomes during protein biosynthesis.</text>
</comment>
<comment type="catalytic activity">
    <reaction evidence="2">
        <text>GTP + H2O = GDP + phosphate + H(+)</text>
        <dbReference type="Rhea" id="RHEA:19669"/>
        <dbReference type="ChEBI" id="CHEBI:15377"/>
        <dbReference type="ChEBI" id="CHEBI:15378"/>
        <dbReference type="ChEBI" id="CHEBI:37565"/>
        <dbReference type="ChEBI" id="CHEBI:43474"/>
        <dbReference type="ChEBI" id="CHEBI:58189"/>
        <dbReference type="EC" id="3.6.5.3"/>
    </reaction>
    <physiologicalReaction direction="left-to-right" evidence="2">
        <dbReference type="Rhea" id="RHEA:19670"/>
    </physiologicalReaction>
</comment>
<comment type="subunit">
    <text evidence="2">Monomer.</text>
</comment>
<comment type="subcellular location">
    <subcellularLocation>
        <location evidence="2">Cytoplasm</location>
    </subcellularLocation>
</comment>
<comment type="similarity">
    <text evidence="2">Belongs to the TRAFAC class translation factor GTPase superfamily. Classic translation factor GTPase family. EF-Tu/EF-1A subfamily.</text>
</comment>
<reference key="1">
    <citation type="journal article" date="2004" name="Environ. Microbiol.">
        <title>The genome of Desulfotalea psychrophila, a sulfate-reducing bacterium from permanently cold Arctic sediments.</title>
        <authorList>
            <person name="Rabus R."/>
            <person name="Ruepp A."/>
            <person name="Frickey T."/>
            <person name="Rattei T."/>
            <person name="Fartmann B."/>
            <person name="Stark M."/>
            <person name="Bauer M."/>
            <person name="Zibat A."/>
            <person name="Lombardot T."/>
            <person name="Becker I."/>
            <person name="Amann J."/>
            <person name="Gellner K."/>
            <person name="Teeling H."/>
            <person name="Leuschner W.D."/>
            <person name="Gloeckner F.-O."/>
            <person name="Lupas A.N."/>
            <person name="Amann R."/>
            <person name="Klenk H.-P."/>
        </authorList>
    </citation>
    <scope>NUCLEOTIDE SEQUENCE [LARGE SCALE GENOMIC DNA]</scope>
    <source>
        <strain>DSM 12343 / LSv54</strain>
    </source>
</reference>
<accession>Q6AP73</accession>
<dbReference type="EC" id="3.6.5.3" evidence="2"/>
<dbReference type="EMBL" id="CR522870">
    <property type="protein sequence ID" value="CAG35851.1"/>
    <property type="molecule type" value="Genomic_DNA"/>
</dbReference>
<dbReference type="RefSeq" id="WP_011188365.1">
    <property type="nucleotide sequence ID" value="NC_006138.1"/>
</dbReference>
<dbReference type="SMR" id="Q6AP73"/>
<dbReference type="STRING" id="177439.DP1122"/>
<dbReference type="KEGG" id="dps:DP1122"/>
<dbReference type="eggNOG" id="COG0050">
    <property type="taxonomic scope" value="Bacteria"/>
</dbReference>
<dbReference type="HOGENOM" id="CLU_007265_0_1_7"/>
<dbReference type="OrthoDB" id="9803139at2"/>
<dbReference type="Proteomes" id="UP000000602">
    <property type="component" value="Chromosome"/>
</dbReference>
<dbReference type="GO" id="GO:0005829">
    <property type="term" value="C:cytosol"/>
    <property type="evidence" value="ECO:0007669"/>
    <property type="project" value="TreeGrafter"/>
</dbReference>
<dbReference type="GO" id="GO:0005525">
    <property type="term" value="F:GTP binding"/>
    <property type="evidence" value="ECO:0007669"/>
    <property type="project" value="UniProtKB-UniRule"/>
</dbReference>
<dbReference type="GO" id="GO:0003924">
    <property type="term" value="F:GTPase activity"/>
    <property type="evidence" value="ECO:0007669"/>
    <property type="project" value="InterPro"/>
</dbReference>
<dbReference type="GO" id="GO:0003746">
    <property type="term" value="F:translation elongation factor activity"/>
    <property type="evidence" value="ECO:0007669"/>
    <property type="project" value="UniProtKB-UniRule"/>
</dbReference>
<dbReference type="CDD" id="cd01884">
    <property type="entry name" value="EF_Tu"/>
    <property type="match status" value="1"/>
</dbReference>
<dbReference type="CDD" id="cd03697">
    <property type="entry name" value="EFTU_II"/>
    <property type="match status" value="1"/>
</dbReference>
<dbReference type="CDD" id="cd03707">
    <property type="entry name" value="EFTU_III"/>
    <property type="match status" value="1"/>
</dbReference>
<dbReference type="FunFam" id="2.40.30.10:FF:000001">
    <property type="entry name" value="Elongation factor Tu"/>
    <property type="match status" value="1"/>
</dbReference>
<dbReference type="FunFam" id="3.40.50.300:FF:000003">
    <property type="entry name" value="Elongation factor Tu"/>
    <property type="match status" value="1"/>
</dbReference>
<dbReference type="Gene3D" id="3.40.50.300">
    <property type="entry name" value="P-loop containing nucleotide triphosphate hydrolases"/>
    <property type="match status" value="1"/>
</dbReference>
<dbReference type="Gene3D" id="2.40.30.10">
    <property type="entry name" value="Translation factors"/>
    <property type="match status" value="2"/>
</dbReference>
<dbReference type="HAMAP" id="MF_00118_B">
    <property type="entry name" value="EF_Tu_B"/>
    <property type="match status" value="1"/>
</dbReference>
<dbReference type="InterPro" id="IPR041709">
    <property type="entry name" value="EF-Tu_GTP-bd"/>
</dbReference>
<dbReference type="InterPro" id="IPR050055">
    <property type="entry name" value="EF-Tu_GTPase"/>
</dbReference>
<dbReference type="InterPro" id="IPR004161">
    <property type="entry name" value="EFTu-like_2"/>
</dbReference>
<dbReference type="InterPro" id="IPR033720">
    <property type="entry name" value="EFTU_2"/>
</dbReference>
<dbReference type="InterPro" id="IPR031157">
    <property type="entry name" value="G_TR_CS"/>
</dbReference>
<dbReference type="InterPro" id="IPR027417">
    <property type="entry name" value="P-loop_NTPase"/>
</dbReference>
<dbReference type="InterPro" id="IPR005225">
    <property type="entry name" value="Small_GTP-bd"/>
</dbReference>
<dbReference type="InterPro" id="IPR000795">
    <property type="entry name" value="T_Tr_GTP-bd_dom"/>
</dbReference>
<dbReference type="InterPro" id="IPR009000">
    <property type="entry name" value="Transl_B-barrel_sf"/>
</dbReference>
<dbReference type="InterPro" id="IPR009001">
    <property type="entry name" value="Transl_elong_EF1A/Init_IF2_C"/>
</dbReference>
<dbReference type="InterPro" id="IPR004541">
    <property type="entry name" value="Transl_elong_EFTu/EF1A_bac/org"/>
</dbReference>
<dbReference type="InterPro" id="IPR004160">
    <property type="entry name" value="Transl_elong_EFTu/EF1A_C"/>
</dbReference>
<dbReference type="NCBIfam" id="TIGR00485">
    <property type="entry name" value="EF-Tu"/>
    <property type="match status" value="1"/>
</dbReference>
<dbReference type="NCBIfam" id="NF000766">
    <property type="entry name" value="PRK00049.1"/>
    <property type="match status" value="1"/>
</dbReference>
<dbReference type="NCBIfam" id="NF009372">
    <property type="entry name" value="PRK12735.1"/>
    <property type="match status" value="1"/>
</dbReference>
<dbReference type="NCBIfam" id="NF009373">
    <property type="entry name" value="PRK12736.1"/>
    <property type="match status" value="1"/>
</dbReference>
<dbReference type="NCBIfam" id="TIGR00231">
    <property type="entry name" value="small_GTP"/>
    <property type="match status" value="1"/>
</dbReference>
<dbReference type="PANTHER" id="PTHR43721:SF22">
    <property type="entry name" value="ELONGATION FACTOR TU, MITOCHONDRIAL"/>
    <property type="match status" value="1"/>
</dbReference>
<dbReference type="PANTHER" id="PTHR43721">
    <property type="entry name" value="ELONGATION FACTOR TU-RELATED"/>
    <property type="match status" value="1"/>
</dbReference>
<dbReference type="Pfam" id="PF00009">
    <property type="entry name" value="GTP_EFTU"/>
    <property type="match status" value="1"/>
</dbReference>
<dbReference type="Pfam" id="PF03144">
    <property type="entry name" value="GTP_EFTU_D2"/>
    <property type="match status" value="1"/>
</dbReference>
<dbReference type="Pfam" id="PF03143">
    <property type="entry name" value="GTP_EFTU_D3"/>
    <property type="match status" value="1"/>
</dbReference>
<dbReference type="PRINTS" id="PR00315">
    <property type="entry name" value="ELONGATNFCT"/>
</dbReference>
<dbReference type="SUPFAM" id="SSF50465">
    <property type="entry name" value="EF-Tu/eEF-1alpha/eIF2-gamma C-terminal domain"/>
    <property type="match status" value="1"/>
</dbReference>
<dbReference type="SUPFAM" id="SSF52540">
    <property type="entry name" value="P-loop containing nucleoside triphosphate hydrolases"/>
    <property type="match status" value="1"/>
</dbReference>
<dbReference type="SUPFAM" id="SSF50447">
    <property type="entry name" value="Translation proteins"/>
    <property type="match status" value="1"/>
</dbReference>
<dbReference type="PROSITE" id="PS00301">
    <property type="entry name" value="G_TR_1"/>
    <property type="match status" value="1"/>
</dbReference>
<dbReference type="PROSITE" id="PS51722">
    <property type="entry name" value="G_TR_2"/>
    <property type="match status" value="1"/>
</dbReference>